<gene>
    <name evidence="1" type="primary">rppH</name>
    <name evidence="1" type="synonym">nudH</name>
    <name type="ordered locus">XOO4151</name>
</gene>
<dbReference type="EC" id="3.6.1.-" evidence="1"/>
<dbReference type="EMBL" id="AE013598">
    <property type="protein sequence ID" value="AAW77405.1"/>
    <property type="molecule type" value="Genomic_DNA"/>
</dbReference>
<dbReference type="SMR" id="Q5GV68"/>
<dbReference type="STRING" id="291331.XOO4151"/>
<dbReference type="KEGG" id="xoo:XOO4151"/>
<dbReference type="HOGENOM" id="CLU_087195_3_1_6"/>
<dbReference type="Proteomes" id="UP000006735">
    <property type="component" value="Chromosome"/>
</dbReference>
<dbReference type="GO" id="GO:0016462">
    <property type="term" value="F:pyrophosphatase activity"/>
    <property type="evidence" value="ECO:0007669"/>
    <property type="project" value="UniProtKB-ARBA"/>
</dbReference>
<dbReference type="CDD" id="cd03671">
    <property type="entry name" value="NUDIX_Ap4A_hydrolase_plant_like"/>
    <property type="match status" value="1"/>
</dbReference>
<dbReference type="FunFam" id="3.90.79.10:FF:000001">
    <property type="entry name" value="RNA pyrophosphohydrolase"/>
    <property type="match status" value="1"/>
</dbReference>
<dbReference type="Gene3D" id="3.90.79.10">
    <property type="entry name" value="Nucleoside Triphosphate Pyrophosphohydrolase"/>
    <property type="match status" value="1"/>
</dbReference>
<dbReference type="HAMAP" id="MF_00298">
    <property type="entry name" value="Nudix_RppH"/>
    <property type="match status" value="1"/>
</dbReference>
<dbReference type="InterPro" id="IPR015797">
    <property type="entry name" value="NUDIX_hydrolase-like_dom_sf"/>
</dbReference>
<dbReference type="InterPro" id="IPR020084">
    <property type="entry name" value="NUDIX_hydrolase_CS"/>
</dbReference>
<dbReference type="InterPro" id="IPR000086">
    <property type="entry name" value="NUDIX_hydrolase_dom"/>
</dbReference>
<dbReference type="InterPro" id="IPR022927">
    <property type="entry name" value="RppH"/>
</dbReference>
<dbReference type="NCBIfam" id="NF001937">
    <property type="entry name" value="PRK00714.1-4"/>
    <property type="match status" value="1"/>
</dbReference>
<dbReference type="NCBIfam" id="NF001938">
    <property type="entry name" value="PRK00714.1-5"/>
    <property type="match status" value="1"/>
</dbReference>
<dbReference type="PANTHER" id="PTHR43736">
    <property type="entry name" value="ADP-RIBOSE PYROPHOSPHATASE"/>
    <property type="match status" value="1"/>
</dbReference>
<dbReference type="PANTHER" id="PTHR43736:SF1">
    <property type="entry name" value="DIHYDRONEOPTERIN TRIPHOSPHATE DIPHOSPHATASE"/>
    <property type="match status" value="1"/>
</dbReference>
<dbReference type="Pfam" id="PF00293">
    <property type="entry name" value="NUDIX"/>
    <property type="match status" value="1"/>
</dbReference>
<dbReference type="SUPFAM" id="SSF55811">
    <property type="entry name" value="Nudix"/>
    <property type="match status" value="1"/>
</dbReference>
<dbReference type="PROSITE" id="PS51462">
    <property type="entry name" value="NUDIX"/>
    <property type="match status" value="1"/>
</dbReference>
<dbReference type="PROSITE" id="PS00893">
    <property type="entry name" value="NUDIX_BOX"/>
    <property type="match status" value="1"/>
</dbReference>
<keyword id="KW-0378">Hydrolase</keyword>
<keyword id="KW-1185">Reference proteome</keyword>
<accession>Q5GV68</accession>
<comment type="function">
    <text evidence="1">Accelerates the degradation of transcripts by removing pyrophosphate from the 5'-end of triphosphorylated RNA, leading to a more labile monophosphorylated state that can stimulate subsequent ribonuclease cleavage.</text>
</comment>
<comment type="cofactor">
    <cofactor evidence="1">
        <name>a divalent metal cation</name>
        <dbReference type="ChEBI" id="CHEBI:60240"/>
    </cofactor>
</comment>
<comment type="similarity">
    <text evidence="1">Belongs to the Nudix hydrolase family. RppH subfamily.</text>
</comment>
<proteinExistence type="inferred from homology"/>
<name>RPPH_XANOR</name>
<feature type="chain" id="PRO_0000231946" description="RNA pyrophosphohydrolase">
    <location>
        <begin position="1"/>
        <end position="205"/>
    </location>
</feature>
<feature type="domain" description="Nudix hydrolase" evidence="1">
    <location>
        <begin position="6"/>
        <end position="149"/>
    </location>
</feature>
<feature type="region of interest" description="Disordered" evidence="2">
    <location>
        <begin position="177"/>
        <end position="205"/>
    </location>
</feature>
<feature type="short sequence motif" description="Nudix box">
    <location>
        <begin position="38"/>
        <end position="59"/>
    </location>
</feature>
<feature type="compositionally biased region" description="Basic residues" evidence="2">
    <location>
        <begin position="187"/>
        <end position="196"/>
    </location>
</feature>
<sequence length="205" mass="23729">MIDPDGFRPNVGIVLMRQDGQVFWARRVRRDGWQFPQGGMNTDETPVEAMYRELREETGLLPEHVELLGATPGWLRYRLPSRAVRRNERQVCIGQKQVWFLLRFTGDESHLKLDHTDTPEFDHWRWVDFWYPVEHVVMFKRGVYARALRHLAPIAQNLAGPAAVGAMPERALEAWLPGSSAAGHDSPRKRPRKRSGARPMRINND</sequence>
<evidence type="ECO:0000255" key="1">
    <source>
        <dbReference type="HAMAP-Rule" id="MF_00298"/>
    </source>
</evidence>
<evidence type="ECO:0000256" key="2">
    <source>
        <dbReference type="SAM" id="MobiDB-lite"/>
    </source>
</evidence>
<organism>
    <name type="scientific">Xanthomonas oryzae pv. oryzae (strain KACC10331 / KXO85)</name>
    <dbReference type="NCBI Taxonomy" id="291331"/>
    <lineage>
        <taxon>Bacteria</taxon>
        <taxon>Pseudomonadati</taxon>
        <taxon>Pseudomonadota</taxon>
        <taxon>Gammaproteobacteria</taxon>
        <taxon>Lysobacterales</taxon>
        <taxon>Lysobacteraceae</taxon>
        <taxon>Xanthomonas</taxon>
    </lineage>
</organism>
<protein>
    <recommendedName>
        <fullName evidence="1">RNA pyrophosphohydrolase</fullName>
        <ecNumber evidence="1">3.6.1.-</ecNumber>
    </recommendedName>
    <alternativeName>
        <fullName evidence="1">(Di)nucleoside polyphosphate hydrolase</fullName>
    </alternativeName>
</protein>
<reference key="1">
    <citation type="journal article" date="2005" name="Nucleic Acids Res.">
        <title>The genome sequence of Xanthomonas oryzae pathovar oryzae KACC10331, the bacterial blight pathogen of rice.</title>
        <authorList>
            <person name="Lee B.-M."/>
            <person name="Park Y.-J."/>
            <person name="Park D.-S."/>
            <person name="Kang H.-W."/>
            <person name="Kim J.-G."/>
            <person name="Song E.-S."/>
            <person name="Park I.-C."/>
            <person name="Yoon U.-H."/>
            <person name="Hahn J.-H."/>
            <person name="Koo B.-S."/>
            <person name="Lee G.-B."/>
            <person name="Kim H."/>
            <person name="Park H.-S."/>
            <person name="Yoon K.-O."/>
            <person name="Kim J.-H."/>
            <person name="Jung C.-H."/>
            <person name="Koh N.-H."/>
            <person name="Seo J.-S."/>
            <person name="Go S.-J."/>
        </authorList>
    </citation>
    <scope>NUCLEOTIDE SEQUENCE [LARGE SCALE GENOMIC DNA]</scope>
    <source>
        <strain>KACC10331 / KXO85</strain>
    </source>
</reference>